<name>ASL1_SCHPO</name>
<sequence>MRTTFATVALAFLSTVGALPYAPNHRHHRRDDDGVLTVYETILETVYVTAVPGANSSSSYTSYSTGLASVTESSDDGASTALPTTSTESVVVTTSAPAASSSATSYPATFVSTPLYTMDNVTAPVWSNTSVPVSTPETSATSSSEFFTSYPATSSESSSSYPASSTEVASSYSASSTEVTSSYPASSEVATSTSSYVAPVSSSVASSSEISAGSATSYVPTSSSSIALSSVVASASVSAANKGVSTPAVSSAAASSSAVVSSVVSSATSVAASSTISSATSSSASASPTSSSVSGKRGLAWIPGTDLGYSDNFVNKGINWYYNWGSYSSGLSSSFEYVLNQHDANSLSSASSVFTGGATVIGFNEPDLSAAGNPIDAATAASYYLQYLTPLRESGAIGYLGSPAISNVGEDWLSEFMSACSDCKIDFIACHWYGIDFSNLQDYINSLANYGLPIWLTEFACTNWDDSNLPSLDEVKTLMTSALGFLDGHGSVERYSWFAPATELGAGVGNNNALISSSGGLSEVGEIYIS</sequence>
<feature type="signal peptide" evidence="1">
    <location>
        <begin position="1"/>
        <end position="18"/>
    </location>
</feature>
<feature type="chain" id="PRO_0000014190" description="Alkali-sensitive linkage protein 1">
    <location>
        <begin position="19"/>
        <end position="530"/>
    </location>
</feature>
<feature type="region of interest" description="Disordered" evidence="2">
    <location>
        <begin position="69"/>
        <end position="90"/>
    </location>
</feature>
<feature type="glycosylation site" description="N-linked (GlcNAc...) asparagine" evidence="1">
    <location>
        <position position="55"/>
    </location>
</feature>
<feature type="glycosylation site" description="N-linked (GlcNAc...) asparagine" evidence="1">
    <location>
        <position position="120"/>
    </location>
</feature>
<feature type="glycosylation site" description="N-linked (GlcNAc...) asparagine" evidence="1">
    <location>
        <position position="128"/>
    </location>
</feature>
<protein>
    <recommendedName>
        <fullName>Alkali-sensitive linkage protein 1</fullName>
    </recommendedName>
</protein>
<accession>Q09788</accession>
<proteinExistence type="evidence at protein level"/>
<keyword id="KW-0134">Cell wall</keyword>
<keyword id="KW-0256">Endoplasmic reticulum</keyword>
<keyword id="KW-0325">Glycoprotein</keyword>
<keyword id="KW-0333">Golgi apparatus</keyword>
<keyword id="KW-1185">Reference proteome</keyword>
<keyword id="KW-0964">Secreted</keyword>
<keyword id="KW-0732">Signal</keyword>
<organism>
    <name type="scientific">Schizosaccharomyces pombe (strain 972 / ATCC 24843)</name>
    <name type="common">Fission yeast</name>
    <dbReference type="NCBI Taxonomy" id="284812"/>
    <lineage>
        <taxon>Eukaryota</taxon>
        <taxon>Fungi</taxon>
        <taxon>Dikarya</taxon>
        <taxon>Ascomycota</taxon>
        <taxon>Taphrinomycotina</taxon>
        <taxon>Schizosaccharomycetes</taxon>
        <taxon>Schizosaccharomycetales</taxon>
        <taxon>Schizosaccharomycetaceae</taxon>
        <taxon>Schizosaccharomyces</taxon>
    </lineage>
</organism>
<dbReference type="EMBL" id="CU329670">
    <property type="protein sequence ID" value="CAA91103.1"/>
    <property type="molecule type" value="Genomic_DNA"/>
</dbReference>
<dbReference type="PIR" id="S62439">
    <property type="entry name" value="S62439"/>
</dbReference>
<dbReference type="RefSeq" id="NP_592836.1">
    <property type="nucleotide sequence ID" value="NM_001018237.2"/>
</dbReference>
<dbReference type="SMR" id="Q09788"/>
<dbReference type="BioGRID" id="279339">
    <property type="interactions" value="67"/>
</dbReference>
<dbReference type="FunCoup" id="Q09788">
    <property type="interactions" value="6"/>
</dbReference>
<dbReference type="STRING" id="284812.Q09788"/>
<dbReference type="CAZy" id="GH128">
    <property type="family name" value="Glycoside Hydrolase Family 128"/>
</dbReference>
<dbReference type="GlyCosmos" id="Q09788">
    <property type="glycosylation" value="3 sites, No reported glycans"/>
</dbReference>
<dbReference type="PaxDb" id="4896-SPAC13G6.10c.1"/>
<dbReference type="EnsemblFungi" id="SPAC13G6.10c.1">
    <property type="protein sequence ID" value="SPAC13G6.10c.1:pep"/>
    <property type="gene ID" value="SPAC13G6.10c"/>
</dbReference>
<dbReference type="GeneID" id="2542895"/>
<dbReference type="KEGG" id="spo:2542895"/>
<dbReference type="PomBase" id="SPAC13G6.10c">
    <property type="gene designation" value="asl1"/>
</dbReference>
<dbReference type="VEuPathDB" id="FungiDB:SPAC13G6.10c"/>
<dbReference type="eggNOG" id="ENOG502RXK9">
    <property type="taxonomic scope" value="Eukaryota"/>
</dbReference>
<dbReference type="HOGENOM" id="CLU_605752_0_0_1"/>
<dbReference type="InParanoid" id="Q09788"/>
<dbReference type="OMA" id="SHKRGVC"/>
<dbReference type="PRO" id="PR:Q09788"/>
<dbReference type="Proteomes" id="UP000002485">
    <property type="component" value="Chromosome I"/>
</dbReference>
<dbReference type="GO" id="GO:0005783">
    <property type="term" value="C:endoplasmic reticulum"/>
    <property type="evidence" value="ECO:0007669"/>
    <property type="project" value="UniProtKB-SubCell"/>
</dbReference>
<dbReference type="GO" id="GO:0010339">
    <property type="term" value="C:external side of cell wall"/>
    <property type="evidence" value="ECO:0000303"/>
    <property type="project" value="PomBase"/>
</dbReference>
<dbReference type="GO" id="GO:0005576">
    <property type="term" value="C:extracellular region"/>
    <property type="evidence" value="ECO:0000314"/>
    <property type="project" value="PomBase"/>
</dbReference>
<dbReference type="GO" id="GO:0009277">
    <property type="term" value="C:fungal-type cell wall"/>
    <property type="evidence" value="ECO:0000314"/>
    <property type="project" value="PomBase"/>
</dbReference>
<dbReference type="GO" id="GO:0005794">
    <property type="term" value="C:Golgi apparatus"/>
    <property type="evidence" value="ECO:0007669"/>
    <property type="project" value="UniProtKB-SubCell"/>
</dbReference>
<dbReference type="GO" id="GO:0004553">
    <property type="term" value="F:hydrolase activity, hydrolyzing O-glycosyl compounds"/>
    <property type="evidence" value="ECO:0000255"/>
    <property type="project" value="PomBase"/>
</dbReference>
<dbReference type="GO" id="GO:0071966">
    <property type="term" value="P:fungal-type cell wall polysaccharide metabolic process"/>
    <property type="evidence" value="ECO:0000315"/>
    <property type="project" value="PomBase"/>
</dbReference>
<dbReference type="Gene3D" id="3.20.20.80">
    <property type="entry name" value="Glycosidases"/>
    <property type="match status" value="1"/>
</dbReference>
<dbReference type="InterPro" id="IPR053183">
    <property type="entry name" value="ASL1"/>
</dbReference>
<dbReference type="InterPro" id="IPR024655">
    <property type="entry name" value="Asl1_glyco_hydro_catalytic"/>
</dbReference>
<dbReference type="InterPro" id="IPR017853">
    <property type="entry name" value="Glycoside_hydrolase_SF"/>
</dbReference>
<dbReference type="PANTHER" id="PTHR34154">
    <property type="entry name" value="ALKALI-SENSITIVE LINKAGE PROTEIN 1"/>
    <property type="match status" value="1"/>
</dbReference>
<dbReference type="PANTHER" id="PTHR34154:SF3">
    <property type="entry name" value="ALKALI-SENSITIVE LINKAGE PROTEIN 1"/>
    <property type="match status" value="1"/>
</dbReference>
<dbReference type="Pfam" id="PF11790">
    <property type="entry name" value="Glyco_hydro_cc"/>
    <property type="match status" value="1"/>
</dbReference>
<dbReference type="SUPFAM" id="SSF51445">
    <property type="entry name" value="(Trans)glycosidases"/>
    <property type="match status" value="1"/>
</dbReference>
<reference key="1">
    <citation type="journal article" date="2002" name="Nature">
        <title>The genome sequence of Schizosaccharomyces pombe.</title>
        <authorList>
            <person name="Wood V."/>
            <person name="Gwilliam R."/>
            <person name="Rajandream M.A."/>
            <person name="Lyne M.H."/>
            <person name="Lyne R."/>
            <person name="Stewart A."/>
            <person name="Sgouros J.G."/>
            <person name="Peat N."/>
            <person name="Hayles J."/>
            <person name="Baker S.G."/>
            <person name="Basham D."/>
            <person name="Bowman S."/>
            <person name="Brooks K."/>
            <person name="Brown D."/>
            <person name="Brown S."/>
            <person name="Chillingworth T."/>
            <person name="Churcher C.M."/>
            <person name="Collins M."/>
            <person name="Connor R."/>
            <person name="Cronin A."/>
            <person name="Davis P."/>
            <person name="Feltwell T."/>
            <person name="Fraser A."/>
            <person name="Gentles S."/>
            <person name="Goble A."/>
            <person name="Hamlin N."/>
            <person name="Harris D.E."/>
            <person name="Hidalgo J."/>
            <person name="Hodgson G."/>
            <person name="Holroyd S."/>
            <person name="Hornsby T."/>
            <person name="Howarth S."/>
            <person name="Huckle E.J."/>
            <person name="Hunt S."/>
            <person name="Jagels K."/>
            <person name="James K.D."/>
            <person name="Jones L."/>
            <person name="Jones M."/>
            <person name="Leather S."/>
            <person name="McDonald S."/>
            <person name="McLean J."/>
            <person name="Mooney P."/>
            <person name="Moule S."/>
            <person name="Mungall K.L."/>
            <person name="Murphy L.D."/>
            <person name="Niblett D."/>
            <person name="Odell C."/>
            <person name="Oliver K."/>
            <person name="O'Neil S."/>
            <person name="Pearson D."/>
            <person name="Quail M.A."/>
            <person name="Rabbinowitsch E."/>
            <person name="Rutherford K.M."/>
            <person name="Rutter S."/>
            <person name="Saunders D."/>
            <person name="Seeger K."/>
            <person name="Sharp S."/>
            <person name="Skelton J."/>
            <person name="Simmonds M.N."/>
            <person name="Squares R."/>
            <person name="Squares S."/>
            <person name="Stevens K."/>
            <person name="Taylor K."/>
            <person name="Taylor R.G."/>
            <person name="Tivey A."/>
            <person name="Walsh S.V."/>
            <person name="Warren T."/>
            <person name="Whitehead S."/>
            <person name="Woodward J.R."/>
            <person name="Volckaert G."/>
            <person name="Aert R."/>
            <person name="Robben J."/>
            <person name="Grymonprez B."/>
            <person name="Weltjens I."/>
            <person name="Vanstreels E."/>
            <person name="Rieger M."/>
            <person name="Schaefer M."/>
            <person name="Mueller-Auer S."/>
            <person name="Gabel C."/>
            <person name="Fuchs M."/>
            <person name="Duesterhoeft A."/>
            <person name="Fritzc C."/>
            <person name="Holzer E."/>
            <person name="Moestl D."/>
            <person name="Hilbert H."/>
            <person name="Borzym K."/>
            <person name="Langer I."/>
            <person name="Beck A."/>
            <person name="Lehrach H."/>
            <person name="Reinhardt R."/>
            <person name="Pohl T.M."/>
            <person name="Eger P."/>
            <person name="Zimmermann W."/>
            <person name="Wedler H."/>
            <person name="Wambutt R."/>
            <person name="Purnelle B."/>
            <person name="Goffeau A."/>
            <person name="Cadieu E."/>
            <person name="Dreano S."/>
            <person name="Gloux S."/>
            <person name="Lelaure V."/>
            <person name="Mottier S."/>
            <person name="Galibert F."/>
            <person name="Aves S.J."/>
            <person name="Xiang Z."/>
            <person name="Hunt C."/>
            <person name="Moore K."/>
            <person name="Hurst S.M."/>
            <person name="Lucas M."/>
            <person name="Rochet M."/>
            <person name="Gaillardin C."/>
            <person name="Tallada V.A."/>
            <person name="Garzon A."/>
            <person name="Thode G."/>
            <person name="Daga R.R."/>
            <person name="Cruzado L."/>
            <person name="Jimenez J."/>
            <person name="Sanchez M."/>
            <person name="del Rey F."/>
            <person name="Benito J."/>
            <person name="Dominguez A."/>
            <person name="Revuelta J.L."/>
            <person name="Moreno S."/>
            <person name="Armstrong J."/>
            <person name="Forsburg S.L."/>
            <person name="Cerutti L."/>
            <person name="Lowe T."/>
            <person name="McCombie W.R."/>
            <person name="Paulsen I."/>
            <person name="Potashkin J."/>
            <person name="Shpakovski G.V."/>
            <person name="Ussery D."/>
            <person name="Barrell B.G."/>
            <person name="Nurse P."/>
        </authorList>
    </citation>
    <scope>NUCLEOTIDE SEQUENCE [LARGE SCALE GENOMIC DNA]</scope>
    <source>
        <strain>972 / ATCC 24843</strain>
    </source>
</reference>
<reference key="2">
    <citation type="journal article" date="2006" name="Nat. Biotechnol.">
        <title>ORFeome cloning and global analysis of protein localization in the fission yeast Schizosaccharomyces pombe.</title>
        <authorList>
            <person name="Matsuyama A."/>
            <person name="Arai R."/>
            <person name="Yashiroda Y."/>
            <person name="Shirai A."/>
            <person name="Kamata A."/>
            <person name="Sekido S."/>
            <person name="Kobayashi Y."/>
            <person name="Hashimoto A."/>
            <person name="Hamamoto M."/>
            <person name="Hiraoka Y."/>
            <person name="Horinouchi S."/>
            <person name="Yoshida M."/>
        </authorList>
    </citation>
    <scope>SUBCELLULAR LOCATION [LARGE SCALE ANALYSIS]</scope>
</reference>
<reference key="3">
    <citation type="journal article" date="2007" name="Yeast">
        <title>Mass spectrometric identification of covalently bound cell wall proteins from the fission yeast Schizosaccharomyces pombe.</title>
        <authorList>
            <person name="de Groot P.W.J."/>
            <person name="Yin Q.Y."/>
            <person name="Weig M."/>
            <person name="Sosinska G.J."/>
            <person name="Klis F.M."/>
            <person name="de Koster C.G."/>
        </authorList>
    </citation>
    <scope>IDENTIFICATION BY MASS SPECTROMETRY</scope>
    <scope>SUBCELLULAR LOCATION</scope>
</reference>
<gene>
    <name type="primary">asl1</name>
    <name type="ORF">SPAC13G6.10c</name>
</gene>
<comment type="subcellular location">
    <subcellularLocation>
        <location evidence="3">Endoplasmic reticulum</location>
    </subcellularLocation>
    <subcellularLocation>
        <location evidence="3">Golgi apparatus</location>
    </subcellularLocation>
    <subcellularLocation>
        <location evidence="4">Secreted</location>
        <location evidence="4">Cell wall</location>
    </subcellularLocation>
    <text evidence="4">Covalently attached to the cell wall.</text>
</comment>
<evidence type="ECO:0000255" key="1"/>
<evidence type="ECO:0000256" key="2">
    <source>
        <dbReference type="SAM" id="MobiDB-lite"/>
    </source>
</evidence>
<evidence type="ECO:0000269" key="3">
    <source>
    </source>
</evidence>
<evidence type="ECO:0000269" key="4">
    <source>
    </source>
</evidence>